<feature type="transit peptide" description="Mitochondrion" evidence="3">
    <location>
        <begin position="1"/>
        <end position="19"/>
    </location>
</feature>
<feature type="chain" id="PRO_0000011630" description="Glutaredoxin-2, mitochondrial">
    <location>
        <begin position="20"/>
        <end position="161"/>
    </location>
</feature>
<feature type="domain" description="Glutaredoxin" evidence="4">
    <location>
        <begin position="54"/>
        <end position="154"/>
    </location>
</feature>
<feature type="binding site" description="in inactive form" evidence="1">
    <location>
        <position position="65"/>
    </location>
    <ligand>
        <name>[2Fe-2S] cluster</name>
        <dbReference type="ChEBI" id="CHEBI:190135"/>
        <note>ligand shared between dimeric partners</note>
    </ligand>
</feature>
<feature type="binding site" evidence="1">
    <location>
        <position position="71"/>
    </location>
    <ligand>
        <name>glutathione</name>
        <dbReference type="ChEBI" id="CHEBI:57925"/>
    </ligand>
</feature>
<feature type="binding site" evidence="1">
    <location>
        <position position="106"/>
    </location>
    <ligand>
        <name>glutathione</name>
        <dbReference type="ChEBI" id="CHEBI:57925"/>
    </ligand>
</feature>
<feature type="binding site" evidence="1">
    <location>
        <position position="118"/>
    </location>
    <ligand>
        <name>glutathione</name>
        <dbReference type="ChEBI" id="CHEBI:57925"/>
    </ligand>
</feature>
<feature type="binding site" description="in inactive form" evidence="1">
    <location>
        <position position="150"/>
    </location>
    <ligand>
        <name>[2Fe-2S] cluster</name>
        <dbReference type="ChEBI" id="CHEBI:190135"/>
        <note>ligand shared between dimeric partners</note>
    </ligand>
</feature>
<feature type="modified residue" description="Phosphoserine" evidence="2">
    <location>
        <position position="20"/>
    </location>
</feature>
<feature type="modified residue" description="S-glutathionyl cysteine; alternate" evidence="1">
    <location>
        <position position="74"/>
    </location>
</feature>
<feature type="disulfide bond" description="Redox-active; alternate" evidence="1">
    <location>
        <begin position="74"/>
        <end position="77"/>
    </location>
</feature>
<dbReference type="EMBL" id="CR858428">
    <property type="protein sequence ID" value="CAH90657.1"/>
    <property type="molecule type" value="mRNA"/>
</dbReference>
<dbReference type="RefSeq" id="NP_001125356.1">
    <property type="nucleotide sequence ID" value="NM_001131884.1"/>
</dbReference>
<dbReference type="SMR" id="Q5RC53"/>
<dbReference type="FunCoup" id="Q5RC53">
    <property type="interactions" value="1826"/>
</dbReference>
<dbReference type="STRING" id="9601.ENSPPYP00000000449"/>
<dbReference type="Ensembl" id="ENSPPYT00000000468.3">
    <property type="protein sequence ID" value="ENSPPYP00000000449.3"/>
    <property type="gene ID" value="ENSPPYG00000000396.3"/>
</dbReference>
<dbReference type="GeneID" id="100172258"/>
<dbReference type="KEGG" id="pon:100172258"/>
<dbReference type="CTD" id="51022"/>
<dbReference type="eggNOG" id="KOG1752">
    <property type="taxonomic scope" value="Eukaryota"/>
</dbReference>
<dbReference type="GeneTree" id="ENSGT00940000162420"/>
<dbReference type="InParanoid" id="Q5RC53"/>
<dbReference type="OrthoDB" id="418495at2759"/>
<dbReference type="Proteomes" id="UP000001595">
    <property type="component" value="Chromosome 1"/>
</dbReference>
<dbReference type="GO" id="GO:0005739">
    <property type="term" value="C:mitochondrion"/>
    <property type="evidence" value="ECO:0007669"/>
    <property type="project" value="UniProtKB-SubCell"/>
</dbReference>
<dbReference type="GO" id="GO:0005654">
    <property type="term" value="C:nucleoplasm"/>
    <property type="evidence" value="ECO:0007669"/>
    <property type="project" value="Ensembl"/>
</dbReference>
<dbReference type="GO" id="GO:0051537">
    <property type="term" value="F:2 iron, 2 sulfur cluster binding"/>
    <property type="evidence" value="ECO:0007669"/>
    <property type="project" value="UniProtKB-KW"/>
</dbReference>
<dbReference type="GO" id="GO:0046872">
    <property type="term" value="F:metal ion binding"/>
    <property type="evidence" value="ECO:0007669"/>
    <property type="project" value="UniProtKB-KW"/>
</dbReference>
<dbReference type="GO" id="GO:0015035">
    <property type="term" value="F:protein-disulfide reductase activity"/>
    <property type="evidence" value="ECO:0007669"/>
    <property type="project" value="TreeGrafter"/>
</dbReference>
<dbReference type="CDD" id="cd03419">
    <property type="entry name" value="GRX_GRXh_1_2_like"/>
    <property type="match status" value="1"/>
</dbReference>
<dbReference type="FunFam" id="3.40.30.10:FF:000026">
    <property type="entry name" value="Glutaredoxin 2"/>
    <property type="match status" value="1"/>
</dbReference>
<dbReference type="Gene3D" id="3.40.30.10">
    <property type="entry name" value="Glutaredoxin"/>
    <property type="match status" value="1"/>
</dbReference>
<dbReference type="InterPro" id="IPR002109">
    <property type="entry name" value="Glutaredoxin"/>
</dbReference>
<dbReference type="InterPro" id="IPR011899">
    <property type="entry name" value="Glutaredoxin_euk/vir"/>
</dbReference>
<dbReference type="InterPro" id="IPR014025">
    <property type="entry name" value="Glutaredoxin_subgr"/>
</dbReference>
<dbReference type="InterPro" id="IPR036249">
    <property type="entry name" value="Thioredoxin-like_sf"/>
</dbReference>
<dbReference type="NCBIfam" id="TIGR02180">
    <property type="entry name" value="GRX_euk"/>
    <property type="match status" value="1"/>
</dbReference>
<dbReference type="PANTHER" id="PTHR46679">
    <property type="match status" value="1"/>
</dbReference>
<dbReference type="PANTHER" id="PTHR46679:SF1">
    <property type="entry name" value="GLUTAREDOXIN-2, MITOCHONDRIAL"/>
    <property type="match status" value="1"/>
</dbReference>
<dbReference type="Pfam" id="PF00462">
    <property type="entry name" value="Glutaredoxin"/>
    <property type="match status" value="1"/>
</dbReference>
<dbReference type="PRINTS" id="PR00160">
    <property type="entry name" value="GLUTAREDOXIN"/>
</dbReference>
<dbReference type="SUPFAM" id="SSF52833">
    <property type="entry name" value="Thioredoxin-like"/>
    <property type="match status" value="1"/>
</dbReference>
<dbReference type="PROSITE" id="PS51354">
    <property type="entry name" value="GLUTAREDOXIN_2"/>
    <property type="match status" value="1"/>
</dbReference>
<organism>
    <name type="scientific">Pongo abelii</name>
    <name type="common">Sumatran orangutan</name>
    <name type="synonym">Pongo pygmaeus abelii</name>
    <dbReference type="NCBI Taxonomy" id="9601"/>
    <lineage>
        <taxon>Eukaryota</taxon>
        <taxon>Metazoa</taxon>
        <taxon>Chordata</taxon>
        <taxon>Craniata</taxon>
        <taxon>Vertebrata</taxon>
        <taxon>Euteleostomi</taxon>
        <taxon>Mammalia</taxon>
        <taxon>Eutheria</taxon>
        <taxon>Euarchontoglires</taxon>
        <taxon>Primates</taxon>
        <taxon>Haplorrhini</taxon>
        <taxon>Catarrhini</taxon>
        <taxon>Hominidae</taxon>
        <taxon>Pongo</taxon>
    </lineage>
</organism>
<keyword id="KW-0001">2Fe-2S</keyword>
<keyword id="KW-1015">Disulfide bond</keyword>
<keyword id="KW-0249">Electron transport</keyword>
<keyword id="KW-0318">Glutathionylation</keyword>
<keyword id="KW-0408">Iron</keyword>
<keyword id="KW-0411">Iron-sulfur</keyword>
<keyword id="KW-0479">Metal-binding</keyword>
<keyword id="KW-0496">Mitochondrion</keyword>
<keyword id="KW-0597">Phosphoprotein</keyword>
<keyword id="KW-0676">Redox-active center</keyword>
<keyword id="KW-1185">Reference proteome</keyword>
<keyword id="KW-0809">Transit peptide</keyword>
<keyword id="KW-0813">Transport</keyword>
<name>GLRX2_PONAB</name>
<sequence length="161" mass="17888">MLWRRAALAGTRLVWSRSGSAGWLDRAAGAAATAASGMESNTSSSLENLETAPVNQIQETISDNCVVIFSKTSCSYCTMAKKLFRDMNVNYKVVELDLLEYGNQFQDALYKMTGGRTVPRIFVNGTFIGGATDTHRLHKEGKLLPLVHQCYLKKSKRKEFQ</sequence>
<accession>Q5RC53</accession>
<evidence type="ECO:0000250" key="1"/>
<evidence type="ECO:0000250" key="2">
    <source>
        <dbReference type="UniProtKB" id="Q9NS18"/>
    </source>
</evidence>
<evidence type="ECO:0000255" key="3"/>
<evidence type="ECO:0000255" key="4">
    <source>
        <dbReference type="PROSITE-ProRule" id="PRU00686"/>
    </source>
</evidence>
<evidence type="ECO:0000305" key="5"/>
<comment type="function">
    <text evidence="1">Glutathione-dependent oxidoreductase that facilitates the maintenance of mitochondrial redox homeostasis upon induction of apoptosis by oxidative stress. Involved in response to hydrogen peroxide and regulation of apoptosis caused by oxidative stress. Acts as a very efficient catalyst of monothiol reactions because of its high affinity for protein glutathione-mixed disulfides. Can receive electrons not only from glutathione (GSH), but also from thioredoxin reductase supporting both monothiol and dithiol reactions. Efficiently catalyzes both glutathionylation and deglutathionylation of mitochondrial complex I, which in turn regulates the superoxide production by the complex. Overexpression decreases the susceptibility to apoptosis and prevents loss of cardiolipin and cytochrome c release (By similarity).</text>
</comment>
<comment type="activity regulation">
    <text evidence="1">The 2Fe-2S present in the homodimer leads to inactivation of the enzyme. The 2Fe-2S may serve as a redox sensor: the presence of one-electron oxidants or reductants leading to the loss of the 2Fe-2S cluster, subsequent monomerization and activation of the enzyme (By similarity).</text>
</comment>
<comment type="subunit">
    <text evidence="1">Monomer; active form. Homodimer; inactive form. The homodimer is probably linked by 1 2Fe-2S cluster (By similarity).</text>
</comment>
<comment type="subcellular location">
    <subcellularLocation>
        <location evidence="1">Mitochondrion</location>
    </subcellularLocation>
</comment>
<comment type="similarity">
    <text evidence="5">Belongs to the glutaredoxin family.</text>
</comment>
<reference key="1">
    <citation type="submission" date="2004-11" db="EMBL/GenBank/DDBJ databases">
        <authorList>
            <consortium name="The German cDNA consortium"/>
        </authorList>
    </citation>
    <scope>NUCLEOTIDE SEQUENCE [LARGE SCALE MRNA]</scope>
    <source>
        <tissue>Kidney</tissue>
    </source>
</reference>
<proteinExistence type="evidence at transcript level"/>
<gene>
    <name type="primary">GLRX2</name>
    <name type="synonym">GRX2</name>
</gene>
<protein>
    <recommendedName>
        <fullName>Glutaredoxin-2, mitochondrial</fullName>
    </recommendedName>
</protein>